<feature type="chain" id="PRO_0000103588" description="Phosphoenolpyruvate carboxykinase [GTP]">
    <location>
        <begin position="1"/>
        <end position="609"/>
    </location>
</feature>
<feature type="active site" evidence="1">
    <location>
        <position position="269"/>
    </location>
</feature>
<feature type="binding site" evidence="1">
    <location>
        <position position="77"/>
    </location>
    <ligand>
        <name>substrate</name>
    </ligand>
</feature>
<feature type="binding site" evidence="1">
    <location>
        <begin position="216"/>
        <end position="218"/>
    </location>
    <ligand>
        <name>substrate</name>
    </ligand>
</feature>
<feature type="binding site" evidence="1">
    <location>
        <position position="225"/>
    </location>
    <ligand>
        <name>Mn(2+)</name>
        <dbReference type="ChEBI" id="CHEBI:29035"/>
    </ligand>
</feature>
<feature type="binding site" evidence="1">
    <location>
        <position position="245"/>
    </location>
    <ligand>
        <name>Mn(2+)</name>
        <dbReference type="ChEBI" id="CHEBI:29035"/>
    </ligand>
</feature>
<feature type="binding site" evidence="1">
    <location>
        <position position="267"/>
    </location>
    <ligand>
        <name>substrate</name>
    </ligand>
</feature>
<feature type="binding site" evidence="1">
    <location>
        <begin position="268"/>
        <end position="273"/>
    </location>
    <ligand>
        <name>GTP</name>
        <dbReference type="ChEBI" id="CHEBI:37565"/>
    </ligand>
</feature>
<feature type="binding site" evidence="1">
    <location>
        <position position="294"/>
    </location>
    <ligand>
        <name>Mn(2+)</name>
        <dbReference type="ChEBI" id="CHEBI:29035"/>
    </ligand>
</feature>
<feature type="binding site" evidence="1">
    <location>
        <begin position="382"/>
        <end position="384"/>
    </location>
    <ligand>
        <name>substrate</name>
    </ligand>
</feature>
<feature type="binding site" evidence="1">
    <location>
        <position position="384"/>
    </location>
    <ligand>
        <name>GTP</name>
        <dbReference type="ChEBI" id="CHEBI:37565"/>
    </ligand>
</feature>
<feature type="binding site" evidence="1">
    <location>
        <position position="415"/>
    </location>
    <ligand>
        <name>GTP</name>
        <dbReference type="ChEBI" id="CHEBI:37565"/>
    </ligand>
</feature>
<feature type="binding site" evidence="1">
    <location>
        <begin position="516"/>
        <end position="519"/>
    </location>
    <ligand>
        <name>GTP</name>
        <dbReference type="ChEBI" id="CHEBI:37565"/>
    </ligand>
</feature>
<keyword id="KW-0963">Cytoplasm</keyword>
<keyword id="KW-0210">Decarboxylase</keyword>
<keyword id="KW-0312">Gluconeogenesis</keyword>
<keyword id="KW-0342">GTP-binding</keyword>
<keyword id="KW-0456">Lyase</keyword>
<keyword id="KW-0464">Manganese</keyword>
<keyword id="KW-0479">Metal-binding</keyword>
<keyword id="KW-0547">Nucleotide-binding</keyword>
<gene>
    <name evidence="1" type="primary">pckG</name>
    <name type="ordered locus">ACIAD2842</name>
</gene>
<comment type="function">
    <text evidence="1">Catalyzes the conversion of oxaloacetate (OAA) to phosphoenolpyruvate (PEP), the rate-limiting step in the metabolic pathway that produces glucose from lactate and other precursors derived from the citric acid cycle.</text>
</comment>
<comment type="catalytic activity">
    <reaction evidence="1">
        <text>oxaloacetate + GTP = phosphoenolpyruvate + GDP + CO2</text>
        <dbReference type="Rhea" id="RHEA:10388"/>
        <dbReference type="ChEBI" id="CHEBI:16452"/>
        <dbReference type="ChEBI" id="CHEBI:16526"/>
        <dbReference type="ChEBI" id="CHEBI:37565"/>
        <dbReference type="ChEBI" id="CHEBI:58189"/>
        <dbReference type="ChEBI" id="CHEBI:58702"/>
        <dbReference type="EC" id="4.1.1.32"/>
    </reaction>
</comment>
<comment type="cofactor">
    <cofactor evidence="1">
        <name>Mn(2+)</name>
        <dbReference type="ChEBI" id="CHEBI:29035"/>
    </cofactor>
    <text evidence="1">Binds 1 Mn(2+) ion per subunit.</text>
</comment>
<comment type="pathway">
    <text evidence="1">Carbohydrate biosynthesis; gluconeogenesis.</text>
</comment>
<comment type="subunit">
    <text evidence="1">Monomer.</text>
</comment>
<comment type="subcellular location">
    <subcellularLocation>
        <location evidence="1">Cytoplasm</location>
    </subcellularLocation>
</comment>
<comment type="similarity">
    <text evidence="1">Belongs to the phosphoenolpyruvate carboxykinase [GTP] family.</text>
</comment>
<proteinExistence type="inferred from homology"/>
<name>PCKG_ACIAD</name>
<dbReference type="EC" id="4.1.1.32" evidence="1"/>
<dbReference type="EMBL" id="CR543861">
    <property type="protein sequence ID" value="CAG69573.1"/>
    <property type="molecule type" value="Genomic_DNA"/>
</dbReference>
<dbReference type="RefSeq" id="WP_004929305.1">
    <property type="nucleotide sequence ID" value="NC_005966.1"/>
</dbReference>
<dbReference type="SMR" id="Q6F8P2"/>
<dbReference type="STRING" id="202950.GCA_001485005_03026"/>
<dbReference type="GeneID" id="45235078"/>
<dbReference type="KEGG" id="aci:ACIAD2842"/>
<dbReference type="eggNOG" id="COG1274">
    <property type="taxonomic scope" value="Bacteria"/>
</dbReference>
<dbReference type="HOGENOM" id="CLU_028872_1_1_6"/>
<dbReference type="OrthoDB" id="9758871at2"/>
<dbReference type="BioCyc" id="ASP62977:ACIAD_RS12815-MONOMER"/>
<dbReference type="UniPathway" id="UPA00138"/>
<dbReference type="Proteomes" id="UP000000430">
    <property type="component" value="Chromosome"/>
</dbReference>
<dbReference type="GO" id="GO:0005829">
    <property type="term" value="C:cytosol"/>
    <property type="evidence" value="ECO:0007669"/>
    <property type="project" value="TreeGrafter"/>
</dbReference>
<dbReference type="GO" id="GO:0005525">
    <property type="term" value="F:GTP binding"/>
    <property type="evidence" value="ECO:0007669"/>
    <property type="project" value="UniProtKB-UniRule"/>
</dbReference>
<dbReference type="GO" id="GO:0030145">
    <property type="term" value="F:manganese ion binding"/>
    <property type="evidence" value="ECO:0007669"/>
    <property type="project" value="UniProtKB-UniRule"/>
</dbReference>
<dbReference type="GO" id="GO:0004613">
    <property type="term" value="F:phosphoenolpyruvate carboxykinase (GTP) activity"/>
    <property type="evidence" value="ECO:0007669"/>
    <property type="project" value="UniProtKB-UniRule"/>
</dbReference>
<dbReference type="GO" id="GO:0071333">
    <property type="term" value="P:cellular response to glucose stimulus"/>
    <property type="evidence" value="ECO:0007669"/>
    <property type="project" value="TreeGrafter"/>
</dbReference>
<dbReference type="GO" id="GO:0006094">
    <property type="term" value="P:gluconeogenesis"/>
    <property type="evidence" value="ECO:0007669"/>
    <property type="project" value="UniProtKB-UniRule"/>
</dbReference>
<dbReference type="GO" id="GO:0046327">
    <property type="term" value="P:glycerol biosynthetic process from pyruvate"/>
    <property type="evidence" value="ECO:0007669"/>
    <property type="project" value="TreeGrafter"/>
</dbReference>
<dbReference type="GO" id="GO:0006107">
    <property type="term" value="P:oxaloacetate metabolic process"/>
    <property type="evidence" value="ECO:0007669"/>
    <property type="project" value="TreeGrafter"/>
</dbReference>
<dbReference type="GO" id="GO:0019543">
    <property type="term" value="P:propionate catabolic process"/>
    <property type="evidence" value="ECO:0007669"/>
    <property type="project" value="TreeGrafter"/>
</dbReference>
<dbReference type="GO" id="GO:0033993">
    <property type="term" value="P:response to lipid"/>
    <property type="evidence" value="ECO:0007669"/>
    <property type="project" value="TreeGrafter"/>
</dbReference>
<dbReference type="GO" id="GO:0042594">
    <property type="term" value="P:response to starvation"/>
    <property type="evidence" value="ECO:0007669"/>
    <property type="project" value="TreeGrafter"/>
</dbReference>
<dbReference type="CDD" id="cd00819">
    <property type="entry name" value="PEPCK_GTP"/>
    <property type="match status" value="1"/>
</dbReference>
<dbReference type="FunFam" id="3.40.449.10:FF:000005">
    <property type="entry name" value="Phosphoenolpyruvate carboxykinase [GTP]"/>
    <property type="match status" value="1"/>
</dbReference>
<dbReference type="Gene3D" id="3.90.228.20">
    <property type="match status" value="1"/>
</dbReference>
<dbReference type="Gene3D" id="3.40.449.10">
    <property type="entry name" value="Phosphoenolpyruvate Carboxykinase, domain 1"/>
    <property type="match status" value="1"/>
</dbReference>
<dbReference type="Gene3D" id="2.170.8.10">
    <property type="entry name" value="Phosphoenolpyruvate Carboxykinase, domain 2"/>
    <property type="match status" value="1"/>
</dbReference>
<dbReference type="HAMAP" id="MF_00452">
    <property type="entry name" value="PEPCK_GTP"/>
    <property type="match status" value="1"/>
</dbReference>
<dbReference type="InterPro" id="IPR018091">
    <property type="entry name" value="PEP_carboxykin_GTP_CS"/>
</dbReference>
<dbReference type="InterPro" id="IPR013035">
    <property type="entry name" value="PEP_carboxykinase_C"/>
</dbReference>
<dbReference type="InterPro" id="IPR008209">
    <property type="entry name" value="PEP_carboxykinase_GTP"/>
</dbReference>
<dbReference type="InterPro" id="IPR035077">
    <property type="entry name" value="PEP_carboxykinase_GTP_C"/>
</dbReference>
<dbReference type="InterPro" id="IPR035078">
    <property type="entry name" value="PEP_carboxykinase_GTP_N"/>
</dbReference>
<dbReference type="InterPro" id="IPR008210">
    <property type="entry name" value="PEP_carboxykinase_N"/>
</dbReference>
<dbReference type="NCBIfam" id="NF003253">
    <property type="entry name" value="PRK04210.1"/>
    <property type="match status" value="1"/>
</dbReference>
<dbReference type="PANTHER" id="PTHR11561">
    <property type="entry name" value="PHOSPHOENOLPYRUVATE CARBOXYKINASE"/>
    <property type="match status" value="1"/>
</dbReference>
<dbReference type="PANTHER" id="PTHR11561:SF0">
    <property type="entry name" value="PHOSPHOENOLPYRUVATE CARBOXYKINASE [GTP]-RELATED"/>
    <property type="match status" value="1"/>
</dbReference>
<dbReference type="Pfam" id="PF00821">
    <property type="entry name" value="PEPCK_GTP"/>
    <property type="match status" value="1"/>
</dbReference>
<dbReference type="Pfam" id="PF17297">
    <property type="entry name" value="PEPCK_N"/>
    <property type="match status" value="1"/>
</dbReference>
<dbReference type="PIRSF" id="PIRSF001348">
    <property type="entry name" value="PEP_carboxykinase_GTP"/>
    <property type="match status" value="1"/>
</dbReference>
<dbReference type="SUPFAM" id="SSF68923">
    <property type="entry name" value="PEP carboxykinase N-terminal domain"/>
    <property type="match status" value="1"/>
</dbReference>
<dbReference type="SUPFAM" id="SSF53795">
    <property type="entry name" value="PEP carboxykinase-like"/>
    <property type="match status" value="1"/>
</dbReference>
<dbReference type="PROSITE" id="PS00505">
    <property type="entry name" value="PEPCK_GTP"/>
    <property type="match status" value="1"/>
</dbReference>
<accession>Q6F8P2</accession>
<protein>
    <recommendedName>
        <fullName evidence="1">Phosphoenolpyruvate carboxykinase [GTP]</fullName>
        <shortName evidence="1">PEP carboxykinase</shortName>
        <shortName evidence="1">PEPCK</shortName>
        <ecNumber evidence="1">4.1.1.32</ecNumber>
    </recommendedName>
</protein>
<sequence>MTQVNAPEFVRHPKLIAWVEEIAKLTKPAKIEWCDGSDEEYQRLIDLMIANGTMQALNQEKHPGSYLANSDPSDVARVEDRTFICSEKQEDAGATNNWEAPEVMRAKLNGLFDGCMQGRTMYVVPFSMGPLGSHIAQIGIELTDSPYVAVSMRKMARMGKAVYDVLGTDGEFVPCVHTVAAPLAEGQKDVAWPCNPEKYIVHYPETREIWSYGSGYGGNALLGKKCLALRIASAMGREQGWLAEHMLILGVTNPKGEKHYIAAAFPSACGKTNFAMLIPPAGYEGWKIETVGDDIAWIKPGEDGRLYAINPEAGFFGVAPGTNTKTNPNCMATLHKDVIYTNVAVTEDGQVWWEGLSKEVPANLTNWKGQPHVAGEKAAHPNARFTVAAGQCPSIDADWENPAGVPISAFIFGGRRADTVPLVSEAFDWVDGVYKAATMGSETTAAAVGQQGIVRRDPFAMLPFAGYNMADYFDHWLQLGQQVGEKAEAAGNKLPKIFNVNWFRRDAEGNFVWPGFGQNMRVLEWMIDRVEGRANAVETPIGYVPTYEDLNWTGTDFSKEEFDLITSQSKDQWITEIESHTELFNKLGERLPKALKERQDQLLQAVQKI</sequence>
<reference key="1">
    <citation type="journal article" date="2004" name="Nucleic Acids Res.">
        <title>Unique features revealed by the genome sequence of Acinetobacter sp. ADP1, a versatile and naturally transformation competent bacterium.</title>
        <authorList>
            <person name="Barbe V."/>
            <person name="Vallenet D."/>
            <person name="Fonknechten N."/>
            <person name="Kreimeyer A."/>
            <person name="Oztas S."/>
            <person name="Labarre L."/>
            <person name="Cruveiller S."/>
            <person name="Robert C."/>
            <person name="Duprat S."/>
            <person name="Wincker P."/>
            <person name="Ornston L.N."/>
            <person name="Weissenbach J."/>
            <person name="Marliere P."/>
            <person name="Cohen G.N."/>
            <person name="Medigue C."/>
        </authorList>
    </citation>
    <scope>NUCLEOTIDE SEQUENCE [LARGE SCALE GENOMIC DNA]</scope>
    <source>
        <strain>ATCC 33305 / BD413 / ADP1</strain>
    </source>
</reference>
<organism>
    <name type="scientific">Acinetobacter baylyi (strain ATCC 33305 / BD413 / ADP1)</name>
    <dbReference type="NCBI Taxonomy" id="62977"/>
    <lineage>
        <taxon>Bacteria</taxon>
        <taxon>Pseudomonadati</taxon>
        <taxon>Pseudomonadota</taxon>
        <taxon>Gammaproteobacteria</taxon>
        <taxon>Moraxellales</taxon>
        <taxon>Moraxellaceae</taxon>
        <taxon>Acinetobacter</taxon>
    </lineage>
</organism>
<evidence type="ECO:0000255" key="1">
    <source>
        <dbReference type="HAMAP-Rule" id="MF_00452"/>
    </source>
</evidence>